<gene>
    <name evidence="1" type="primary">rpl2</name>
    <name type="ordered locus">MA_1075</name>
</gene>
<dbReference type="EMBL" id="AE010299">
    <property type="protein sequence ID" value="AAM04500.1"/>
    <property type="molecule type" value="Genomic_DNA"/>
</dbReference>
<dbReference type="RefSeq" id="WP_011021104.1">
    <property type="nucleotide sequence ID" value="NC_003552.1"/>
</dbReference>
<dbReference type="SMR" id="Q8TRU4"/>
<dbReference type="FunCoup" id="Q8TRU4">
    <property type="interactions" value="160"/>
</dbReference>
<dbReference type="STRING" id="188937.MA_1075"/>
<dbReference type="EnsemblBacteria" id="AAM04500">
    <property type="protein sequence ID" value="AAM04500"/>
    <property type="gene ID" value="MA_1075"/>
</dbReference>
<dbReference type="GeneID" id="1472965"/>
<dbReference type="KEGG" id="mac:MA_1075"/>
<dbReference type="HOGENOM" id="CLU_036235_0_3_2"/>
<dbReference type="InParanoid" id="Q8TRU4"/>
<dbReference type="OrthoDB" id="5987at2157"/>
<dbReference type="PhylomeDB" id="Q8TRU4"/>
<dbReference type="Proteomes" id="UP000002487">
    <property type="component" value="Chromosome"/>
</dbReference>
<dbReference type="GO" id="GO:0022625">
    <property type="term" value="C:cytosolic large ribosomal subunit"/>
    <property type="evidence" value="ECO:0000318"/>
    <property type="project" value="GO_Central"/>
</dbReference>
<dbReference type="GO" id="GO:0003723">
    <property type="term" value="F:RNA binding"/>
    <property type="evidence" value="ECO:0000318"/>
    <property type="project" value="GO_Central"/>
</dbReference>
<dbReference type="GO" id="GO:0019843">
    <property type="term" value="F:rRNA binding"/>
    <property type="evidence" value="ECO:0007669"/>
    <property type="project" value="UniProtKB-UniRule"/>
</dbReference>
<dbReference type="GO" id="GO:0003735">
    <property type="term" value="F:structural constituent of ribosome"/>
    <property type="evidence" value="ECO:0000318"/>
    <property type="project" value="GO_Central"/>
</dbReference>
<dbReference type="GO" id="GO:0002181">
    <property type="term" value="P:cytoplasmic translation"/>
    <property type="evidence" value="ECO:0000318"/>
    <property type="project" value="GO_Central"/>
</dbReference>
<dbReference type="FunFam" id="2.40.50.140:FF:000020">
    <property type="entry name" value="60S ribosomal protein L2"/>
    <property type="match status" value="1"/>
</dbReference>
<dbReference type="FunFam" id="4.10.950.10:FF:000002">
    <property type="entry name" value="60S ribosomal protein L2"/>
    <property type="match status" value="1"/>
</dbReference>
<dbReference type="FunFam" id="2.30.30.30:FF:000006">
    <property type="entry name" value="60S ribosomal protein L8"/>
    <property type="match status" value="1"/>
</dbReference>
<dbReference type="Gene3D" id="2.30.30.30">
    <property type="match status" value="1"/>
</dbReference>
<dbReference type="Gene3D" id="2.40.50.140">
    <property type="entry name" value="Nucleic acid-binding proteins"/>
    <property type="match status" value="1"/>
</dbReference>
<dbReference type="Gene3D" id="4.10.950.10">
    <property type="entry name" value="Ribosomal protein L2, domain 3"/>
    <property type="match status" value="1"/>
</dbReference>
<dbReference type="HAMAP" id="MF_01320_A">
    <property type="entry name" value="Ribosomal_uL2_A"/>
    <property type="match status" value="1"/>
</dbReference>
<dbReference type="InterPro" id="IPR012340">
    <property type="entry name" value="NA-bd_OB-fold"/>
</dbReference>
<dbReference type="InterPro" id="IPR014722">
    <property type="entry name" value="Rib_uL2_dom2"/>
</dbReference>
<dbReference type="InterPro" id="IPR002171">
    <property type="entry name" value="Ribosomal_uL2"/>
</dbReference>
<dbReference type="InterPro" id="IPR023672">
    <property type="entry name" value="Ribosomal_uL2_arc_euk"/>
</dbReference>
<dbReference type="InterPro" id="IPR022669">
    <property type="entry name" value="Ribosomal_uL2_C"/>
</dbReference>
<dbReference type="InterPro" id="IPR014726">
    <property type="entry name" value="Ribosomal_uL2_dom3"/>
</dbReference>
<dbReference type="InterPro" id="IPR022666">
    <property type="entry name" value="Ribosomal_uL2_RNA-bd_dom"/>
</dbReference>
<dbReference type="InterPro" id="IPR008991">
    <property type="entry name" value="Translation_prot_SH3-like_sf"/>
</dbReference>
<dbReference type="NCBIfam" id="NF007180">
    <property type="entry name" value="PRK09612.1"/>
    <property type="match status" value="1"/>
</dbReference>
<dbReference type="PANTHER" id="PTHR13691:SF16">
    <property type="entry name" value="LARGE RIBOSOMAL SUBUNIT PROTEIN UL2"/>
    <property type="match status" value="1"/>
</dbReference>
<dbReference type="PANTHER" id="PTHR13691">
    <property type="entry name" value="RIBOSOMAL PROTEIN L2"/>
    <property type="match status" value="1"/>
</dbReference>
<dbReference type="Pfam" id="PF00181">
    <property type="entry name" value="Ribosomal_L2"/>
    <property type="match status" value="1"/>
</dbReference>
<dbReference type="Pfam" id="PF03947">
    <property type="entry name" value="Ribosomal_L2_C"/>
    <property type="match status" value="1"/>
</dbReference>
<dbReference type="PIRSF" id="PIRSF002158">
    <property type="entry name" value="Ribosomal_L2"/>
    <property type="match status" value="1"/>
</dbReference>
<dbReference type="SMART" id="SM01383">
    <property type="entry name" value="Ribosomal_L2"/>
    <property type="match status" value="1"/>
</dbReference>
<dbReference type="SMART" id="SM01382">
    <property type="entry name" value="Ribosomal_L2_C"/>
    <property type="match status" value="1"/>
</dbReference>
<dbReference type="SUPFAM" id="SSF50249">
    <property type="entry name" value="Nucleic acid-binding proteins"/>
    <property type="match status" value="1"/>
</dbReference>
<dbReference type="SUPFAM" id="SSF50104">
    <property type="entry name" value="Translation proteins SH3-like domain"/>
    <property type="match status" value="1"/>
</dbReference>
<feature type="chain" id="PRO_0000129714" description="Large ribosomal subunit protein uL2">
    <location>
        <begin position="1"/>
        <end position="238"/>
    </location>
</feature>
<feature type="region of interest" description="Disordered" evidence="2">
    <location>
        <begin position="1"/>
        <end position="22"/>
    </location>
</feature>
<feature type="region of interest" description="Disordered" evidence="2">
    <location>
        <begin position="202"/>
        <end position="223"/>
    </location>
</feature>
<feature type="compositionally biased region" description="Polar residues" evidence="2">
    <location>
        <begin position="1"/>
        <end position="11"/>
    </location>
</feature>
<keyword id="KW-1185">Reference proteome</keyword>
<keyword id="KW-0687">Ribonucleoprotein</keyword>
<keyword id="KW-0689">Ribosomal protein</keyword>
<keyword id="KW-0694">RNA-binding</keyword>
<keyword id="KW-0699">rRNA-binding</keyword>
<comment type="function">
    <text evidence="1">One of the primary rRNA binding proteins. Required for association of the 30S and 50S subunits to form the 70S ribosome, for tRNA binding and peptide bond formation. It has been suggested to have peptidyltransferase activity; this is somewhat controversial. Makes several contacts with the 16S rRNA in the 70S ribosome.</text>
</comment>
<comment type="subunit">
    <text evidence="1">Part of the 50S ribosomal subunit. Forms a bridge to the 30S subunit in the 70S ribosome.</text>
</comment>
<comment type="similarity">
    <text evidence="1">Belongs to the universal ribosomal protein uL2 family.</text>
</comment>
<name>RL2_METAC</name>
<sequence>MGKRLISQNRGRGTPTYRAPSHKYKADLRHPRVDENSSLRGEVVGIEHDPARSAPIAKVAFENGEELFLLASEGIAVGNIIECGDDAEVKPGNIVPIGNVPEGFFICNVESKPNDGGKFVRSSGVYATVVTHEATRTAVSMPSGNIKWLNPKCRAVVGIVAGSGRVDRPWLKAGKKYHKMKTRAAKYPRVSAVAMNPRDHPFGGGAWKHPGKPTTVSRNAPPGRKVGLIAARRTGMKR</sequence>
<organism>
    <name type="scientific">Methanosarcina acetivorans (strain ATCC 35395 / DSM 2834 / JCM 12185 / C2A)</name>
    <dbReference type="NCBI Taxonomy" id="188937"/>
    <lineage>
        <taxon>Archaea</taxon>
        <taxon>Methanobacteriati</taxon>
        <taxon>Methanobacteriota</taxon>
        <taxon>Stenosarchaea group</taxon>
        <taxon>Methanomicrobia</taxon>
        <taxon>Methanosarcinales</taxon>
        <taxon>Methanosarcinaceae</taxon>
        <taxon>Methanosarcina</taxon>
    </lineage>
</organism>
<accession>Q8TRU4</accession>
<reference key="1">
    <citation type="journal article" date="2002" name="Genome Res.">
        <title>The genome of Methanosarcina acetivorans reveals extensive metabolic and physiological diversity.</title>
        <authorList>
            <person name="Galagan J.E."/>
            <person name="Nusbaum C."/>
            <person name="Roy A."/>
            <person name="Endrizzi M.G."/>
            <person name="Macdonald P."/>
            <person name="FitzHugh W."/>
            <person name="Calvo S."/>
            <person name="Engels R."/>
            <person name="Smirnov S."/>
            <person name="Atnoor D."/>
            <person name="Brown A."/>
            <person name="Allen N."/>
            <person name="Naylor J."/>
            <person name="Stange-Thomann N."/>
            <person name="DeArellano K."/>
            <person name="Johnson R."/>
            <person name="Linton L."/>
            <person name="McEwan P."/>
            <person name="McKernan K."/>
            <person name="Talamas J."/>
            <person name="Tirrell A."/>
            <person name="Ye W."/>
            <person name="Zimmer A."/>
            <person name="Barber R.D."/>
            <person name="Cann I."/>
            <person name="Graham D.E."/>
            <person name="Grahame D.A."/>
            <person name="Guss A.M."/>
            <person name="Hedderich R."/>
            <person name="Ingram-Smith C."/>
            <person name="Kuettner H.C."/>
            <person name="Krzycki J.A."/>
            <person name="Leigh J.A."/>
            <person name="Li W."/>
            <person name="Liu J."/>
            <person name="Mukhopadhyay B."/>
            <person name="Reeve J.N."/>
            <person name="Smith K."/>
            <person name="Springer T.A."/>
            <person name="Umayam L.A."/>
            <person name="White O."/>
            <person name="White R.H."/>
            <person name="de Macario E.C."/>
            <person name="Ferry J.G."/>
            <person name="Jarrell K.F."/>
            <person name="Jing H."/>
            <person name="Macario A.J.L."/>
            <person name="Paulsen I.T."/>
            <person name="Pritchett M."/>
            <person name="Sowers K.R."/>
            <person name="Swanson R.V."/>
            <person name="Zinder S.H."/>
            <person name="Lander E."/>
            <person name="Metcalf W.W."/>
            <person name="Birren B."/>
        </authorList>
    </citation>
    <scope>NUCLEOTIDE SEQUENCE [LARGE SCALE GENOMIC DNA]</scope>
    <source>
        <strain>ATCC 35395 / DSM 2834 / JCM 12185 / C2A</strain>
    </source>
</reference>
<proteinExistence type="inferred from homology"/>
<evidence type="ECO:0000255" key="1">
    <source>
        <dbReference type="HAMAP-Rule" id="MF_01320"/>
    </source>
</evidence>
<evidence type="ECO:0000256" key="2">
    <source>
        <dbReference type="SAM" id="MobiDB-lite"/>
    </source>
</evidence>
<evidence type="ECO:0000305" key="3"/>
<protein>
    <recommendedName>
        <fullName evidence="1">Large ribosomal subunit protein uL2</fullName>
    </recommendedName>
    <alternativeName>
        <fullName evidence="3">50S ribosomal protein L2</fullName>
    </alternativeName>
</protein>